<protein>
    <recommendedName>
        <fullName evidence="1">Lipoprotein signal peptidase</fullName>
        <ecNumber evidence="1">3.4.23.36</ecNumber>
    </recommendedName>
    <alternativeName>
        <fullName evidence="1">Prolipoprotein signal peptidase</fullName>
    </alternativeName>
    <alternativeName>
        <fullName evidence="1">Signal peptidase II</fullName>
        <shortName evidence="1">SPase II</shortName>
    </alternativeName>
</protein>
<keyword id="KW-0064">Aspartyl protease</keyword>
<keyword id="KW-0997">Cell inner membrane</keyword>
<keyword id="KW-1003">Cell membrane</keyword>
<keyword id="KW-0378">Hydrolase</keyword>
<keyword id="KW-0472">Membrane</keyword>
<keyword id="KW-0645">Protease</keyword>
<keyword id="KW-1185">Reference proteome</keyword>
<keyword id="KW-0812">Transmembrane</keyword>
<keyword id="KW-1133">Transmembrane helix</keyword>
<feature type="chain" id="PRO_1000097269" description="Lipoprotein signal peptidase">
    <location>
        <begin position="1"/>
        <end position="169"/>
    </location>
</feature>
<feature type="transmembrane region" description="Helical" evidence="1">
    <location>
        <begin position="59"/>
        <end position="79"/>
    </location>
</feature>
<feature type="transmembrane region" description="Helical" evidence="1">
    <location>
        <begin position="84"/>
        <end position="104"/>
    </location>
</feature>
<feature type="transmembrane region" description="Helical" evidence="1">
    <location>
        <begin position="132"/>
        <end position="152"/>
    </location>
</feature>
<feature type="active site" evidence="1">
    <location>
        <position position="113"/>
    </location>
</feature>
<feature type="active site" evidence="1">
    <location>
        <position position="139"/>
    </location>
</feature>
<comment type="function">
    <text evidence="1">This protein specifically catalyzes the removal of signal peptides from prolipoproteins.</text>
</comment>
<comment type="catalytic activity">
    <reaction evidence="1">
        <text>Release of signal peptides from bacterial membrane prolipoproteins. Hydrolyzes -Xaa-Yaa-Zaa-|-(S,diacylglyceryl)Cys-, in which Xaa is hydrophobic (preferably Leu), and Yaa (Ala or Ser) and Zaa (Gly or Ala) have small, neutral side chains.</text>
        <dbReference type="EC" id="3.4.23.36"/>
    </reaction>
</comment>
<comment type="pathway">
    <text evidence="1">Protein modification; lipoprotein biosynthesis (signal peptide cleavage).</text>
</comment>
<comment type="subcellular location">
    <subcellularLocation>
        <location evidence="1">Cell inner membrane</location>
        <topology evidence="1">Multi-pass membrane protein</topology>
    </subcellularLocation>
</comment>
<comment type="similarity">
    <text evidence="1">Belongs to the peptidase A8 family.</text>
</comment>
<evidence type="ECO:0000255" key="1">
    <source>
        <dbReference type="HAMAP-Rule" id="MF_00161"/>
    </source>
</evidence>
<sequence length="169" mass="18895">MKLFFSIVLLVITLDQFTKKLALTFLRDGVQSITIIADLFSLTYAENRGVAFGLEFAPPTVLLLLTGVITIMVLAYVIWSKNRTTLFLLPFALITGGGIGNMIDRVMYGKVVDFIYFDLYQGHIFGRWVSLWPIFNIADSAITIGACMLMIFHNKLFPAESPTGTTDVR</sequence>
<organism>
    <name type="scientific">Pelodictyon phaeoclathratiforme (strain DSM 5477 / BU-1)</name>
    <dbReference type="NCBI Taxonomy" id="324925"/>
    <lineage>
        <taxon>Bacteria</taxon>
        <taxon>Pseudomonadati</taxon>
        <taxon>Chlorobiota</taxon>
        <taxon>Chlorobiia</taxon>
        <taxon>Chlorobiales</taxon>
        <taxon>Chlorobiaceae</taxon>
        <taxon>Chlorobium/Pelodictyon group</taxon>
        <taxon>Pelodictyon</taxon>
    </lineage>
</organism>
<accession>B4SD15</accession>
<dbReference type="EC" id="3.4.23.36" evidence="1"/>
<dbReference type="EMBL" id="CP001110">
    <property type="protein sequence ID" value="ACF44274.1"/>
    <property type="molecule type" value="Genomic_DNA"/>
</dbReference>
<dbReference type="RefSeq" id="WP_012508753.1">
    <property type="nucleotide sequence ID" value="NC_011060.1"/>
</dbReference>
<dbReference type="SMR" id="B4SD15"/>
<dbReference type="STRING" id="324925.Ppha_2067"/>
<dbReference type="KEGG" id="pph:Ppha_2067"/>
<dbReference type="eggNOG" id="COG0597">
    <property type="taxonomic scope" value="Bacteria"/>
</dbReference>
<dbReference type="HOGENOM" id="CLU_083252_3_1_10"/>
<dbReference type="OrthoDB" id="9810259at2"/>
<dbReference type="UniPathway" id="UPA00665"/>
<dbReference type="Proteomes" id="UP000002724">
    <property type="component" value="Chromosome"/>
</dbReference>
<dbReference type="GO" id="GO:0005886">
    <property type="term" value="C:plasma membrane"/>
    <property type="evidence" value="ECO:0007669"/>
    <property type="project" value="UniProtKB-SubCell"/>
</dbReference>
<dbReference type="GO" id="GO:0004190">
    <property type="term" value="F:aspartic-type endopeptidase activity"/>
    <property type="evidence" value="ECO:0007669"/>
    <property type="project" value="UniProtKB-UniRule"/>
</dbReference>
<dbReference type="GO" id="GO:0006508">
    <property type="term" value="P:proteolysis"/>
    <property type="evidence" value="ECO:0007669"/>
    <property type="project" value="UniProtKB-KW"/>
</dbReference>
<dbReference type="HAMAP" id="MF_00161">
    <property type="entry name" value="LspA"/>
    <property type="match status" value="1"/>
</dbReference>
<dbReference type="InterPro" id="IPR001872">
    <property type="entry name" value="Peptidase_A8"/>
</dbReference>
<dbReference type="NCBIfam" id="TIGR00077">
    <property type="entry name" value="lspA"/>
    <property type="match status" value="1"/>
</dbReference>
<dbReference type="NCBIfam" id="NF011368">
    <property type="entry name" value="PRK14787.1"/>
    <property type="match status" value="1"/>
</dbReference>
<dbReference type="PANTHER" id="PTHR33695">
    <property type="entry name" value="LIPOPROTEIN SIGNAL PEPTIDASE"/>
    <property type="match status" value="1"/>
</dbReference>
<dbReference type="PANTHER" id="PTHR33695:SF1">
    <property type="entry name" value="LIPOPROTEIN SIGNAL PEPTIDASE"/>
    <property type="match status" value="1"/>
</dbReference>
<dbReference type="Pfam" id="PF01252">
    <property type="entry name" value="Peptidase_A8"/>
    <property type="match status" value="1"/>
</dbReference>
<dbReference type="PRINTS" id="PR00781">
    <property type="entry name" value="LIPOSIGPTASE"/>
</dbReference>
<dbReference type="PROSITE" id="PS00855">
    <property type="entry name" value="SPASE_II"/>
    <property type="match status" value="1"/>
</dbReference>
<name>LSPA_PELPB</name>
<gene>
    <name evidence="1" type="primary">lspA</name>
    <name type="ordered locus">Ppha_2067</name>
</gene>
<reference key="1">
    <citation type="submission" date="2008-06" db="EMBL/GenBank/DDBJ databases">
        <title>Complete sequence of Pelodictyon phaeoclathratiforme BU-1.</title>
        <authorList>
            <consortium name="US DOE Joint Genome Institute"/>
            <person name="Lucas S."/>
            <person name="Copeland A."/>
            <person name="Lapidus A."/>
            <person name="Glavina del Rio T."/>
            <person name="Dalin E."/>
            <person name="Tice H."/>
            <person name="Bruce D."/>
            <person name="Goodwin L."/>
            <person name="Pitluck S."/>
            <person name="Schmutz J."/>
            <person name="Larimer F."/>
            <person name="Land M."/>
            <person name="Hauser L."/>
            <person name="Kyrpides N."/>
            <person name="Mikhailova N."/>
            <person name="Liu Z."/>
            <person name="Li T."/>
            <person name="Zhao F."/>
            <person name="Overmann J."/>
            <person name="Bryant D.A."/>
            <person name="Richardson P."/>
        </authorList>
    </citation>
    <scope>NUCLEOTIDE SEQUENCE [LARGE SCALE GENOMIC DNA]</scope>
    <source>
        <strain>DSM 5477 / BU-1</strain>
    </source>
</reference>
<proteinExistence type="inferred from homology"/>